<reference key="1">
    <citation type="journal article" date="2006" name="Science">
        <title>Genomic islands and the ecology and evolution of Prochlorococcus.</title>
        <authorList>
            <person name="Coleman M.L."/>
            <person name="Sullivan M.B."/>
            <person name="Martiny A.C."/>
            <person name="Steglich C."/>
            <person name="Barry K."/>
            <person name="Delong E.F."/>
            <person name="Chisholm S.W."/>
        </authorList>
    </citation>
    <scope>NUCLEOTIDE SEQUENCE [LARGE SCALE GENOMIC DNA]</scope>
    <source>
        <strain>MIT 9312</strain>
    </source>
</reference>
<protein>
    <recommendedName>
        <fullName evidence="1">ATP-dependent Clp protease proteolytic subunit 1</fullName>
        <ecNumber evidence="1">3.4.21.92</ecNumber>
    </recommendedName>
    <alternativeName>
        <fullName evidence="1">Endopeptidase Clp 1</fullName>
    </alternativeName>
</protein>
<evidence type="ECO:0000255" key="1">
    <source>
        <dbReference type="HAMAP-Rule" id="MF_00444"/>
    </source>
</evidence>
<proteinExistence type="inferred from homology"/>
<feature type="chain" id="PRO_0000236398" description="ATP-dependent Clp protease proteolytic subunit 1">
    <location>
        <begin position="1"/>
        <end position="195"/>
    </location>
</feature>
<feature type="active site" description="Nucleophile" evidence="1">
    <location>
        <position position="96"/>
    </location>
</feature>
<feature type="active site" evidence="1">
    <location>
        <position position="121"/>
    </location>
</feature>
<comment type="function">
    <text evidence="1">Cleaves peptides in various proteins in a process that requires ATP hydrolysis. Has a chymotrypsin-like activity. Plays a major role in the degradation of misfolded proteins.</text>
</comment>
<comment type="catalytic activity">
    <reaction evidence="1">
        <text>Hydrolysis of proteins to small peptides in the presence of ATP and magnesium. alpha-casein is the usual test substrate. In the absence of ATP, only oligopeptides shorter than five residues are hydrolyzed (such as succinyl-Leu-Tyr-|-NHMec, and Leu-Tyr-Leu-|-Tyr-Trp, in which cleavage of the -Tyr-|-Leu- and -Tyr-|-Trp bonds also occurs).</text>
        <dbReference type="EC" id="3.4.21.92"/>
    </reaction>
</comment>
<comment type="subunit">
    <text evidence="1">Fourteen ClpP subunits assemble into 2 heptameric rings which stack back to back to give a disk-like structure with a central cavity, resembling the structure of eukaryotic proteasomes.</text>
</comment>
<comment type="subcellular location">
    <subcellularLocation>
        <location evidence="1">Cytoplasm</location>
    </subcellularLocation>
</comment>
<comment type="similarity">
    <text evidence="1">Belongs to the peptidase S14 family.</text>
</comment>
<organism>
    <name type="scientific">Prochlorococcus marinus (strain MIT 9312)</name>
    <dbReference type="NCBI Taxonomy" id="74546"/>
    <lineage>
        <taxon>Bacteria</taxon>
        <taxon>Bacillati</taxon>
        <taxon>Cyanobacteriota</taxon>
        <taxon>Cyanophyceae</taxon>
        <taxon>Synechococcales</taxon>
        <taxon>Prochlorococcaceae</taxon>
        <taxon>Prochlorococcus</taxon>
    </lineage>
</organism>
<dbReference type="EC" id="3.4.21.92" evidence="1"/>
<dbReference type="EMBL" id="CP000111">
    <property type="protein sequence ID" value="ABB49810.1"/>
    <property type="molecule type" value="Genomic_DNA"/>
</dbReference>
<dbReference type="SMR" id="Q31BD5"/>
<dbReference type="STRING" id="74546.PMT9312_0750"/>
<dbReference type="MEROPS" id="S14.001"/>
<dbReference type="KEGG" id="pmi:PMT9312_0750"/>
<dbReference type="eggNOG" id="COG0740">
    <property type="taxonomic scope" value="Bacteria"/>
</dbReference>
<dbReference type="HOGENOM" id="CLU_058707_3_2_3"/>
<dbReference type="OrthoDB" id="571524at2"/>
<dbReference type="Proteomes" id="UP000002715">
    <property type="component" value="Chromosome"/>
</dbReference>
<dbReference type="GO" id="GO:0005737">
    <property type="term" value="C:cytoplasm"/>
    <property type="evidence" value="ECO:0007669"/>
    <property type="project" value="UniProtKB-SubCell"/>
</dbReference>
<dbReference type="GO" id="GO:0009368">
    <property type="term" value="C:endopeptidase Clp complex"/>
    <property type="evidence" value="ECO:0007669"/>
    <property type="project" value="TreeGrafter"/>
</dbReference>
<dbReference type="GO" id="GO:0004176">
    <property type="term" value="F:ATP-dependent peptidase activity"/>
    <property type="evidence" value="ECO:0007669"/>
    <property type="project" value="InterPro"/>
</dbReference>
<dbReference type="GO" id="GO:0051117">
    <property type="term" value="F:ATPase binding"/>
    <property type="evidence" value="ECO:0007669"/>
    <property type="project" value="TreeGrafter"/>
</dbReference>
<dbReference type="GO" id="GO:0004252">
    <property type="term" value="F:serine-type endopeptidase activity"/>
    <property type="evidence" value="ECO:0007669"/>
    <property type="project" value="UniProtKB-UniRule"/>
</dbReference>
<dbReference type="GO" id="GO:0006515">
    <property type="term" value="P:protein quality control for misfolded or incompletely synthesized proteins"/>
    <property type="evidence" value="ECO:0007669"/>
    <property type="project" value="TreeGrafter"/>
</dbReference>
<dbReference type="CDD" id="cd07017">
    <property type="entry name" value="S14_ClpP_2"/>
    <property type="match status" value="1"/>
</dbReference>
<dbReference type="FunFam" id="3.90.226.10:FF:000001">
    <property type="entry name" value="ATP-dependent Clp protease proteolytic subunit"/>
    <property type="match status" value="1"/>
</dbReference>
<dbReference type="Gene3D" id="3.90.226.10">
    <property type="entry name" value="2-enoyl-CoA Hydratase, Chain A, domain 1"/>
    <property type="match status" value="1"/>
</dbReference>
<dbReference type="HAMAP" id="MF_00444">
    <property type="entry name" value="ClpP"/>
    <property type="match status" value="1"/>
</dbReference>
<dbReference type="InterPro" id="IPR001907">
    <property type="entry name" value="ClpP"/>
</dbReference>
<dbReference type="InterPro" id="IPR029045">
    <property type="entry name" value="ClpP/crotonase-like_dom_sf"/>
</dbReference>
<dbReference type="InterPro" id="IPR023562">
    <property type="entry name" value="ClpP/TepA"/>
</dbReference>
<dbReference type="InterPro" id="IPR018215">
    <property type="entry name" value="ClpP_Ser_AS"/>
</dbReference>
<dbReference type="NCBIfam" id="TIGR00493">
    <property type="entry name" value="clpP"/>
    <property type="match status" value="1"/>
</dbReference>
<dbReference type="NCBIfam" id="NF001368">
    <property type="entry name" value="PRK00277.1"/>
    <property type="match status" value="1"/>
</dbReference>
<dbReference type="NCBIfam" id="NF009203">
    <property type="entry name" value="PRK12551.1"/>
    <property type="match status" value="1"/>
</dbReference>
<dbReference type="NCBIfam" id="NF009205">
    <property type="entry name" value="PRK12553.1"/>
    <property type="match status" value="1"/>
</dbReference>
<dbReference type="PANTHER" id="PTHR10381">
    <property type="entry name" value="ATP-DEPENDENT CLP PROTEASE PROTEOLYTIC SUBUNIT"/>
    <property type="match status" value="1"/>
</dbReference>
<dbReference type="PANTHER" id="PTHR10381:SF70">
    <property type="entry name" value="ATP-DEPENDENT CLP PROTEASE PROTEOLYTIC SUBUNIT"/>
    <property type="match status" value="1"/>
</dbReference>
<dbReference type="Pfam" id="PF00574">
    <property type="entry name" value="CLP_protease"/>
    <property type="match status" value="1"/>
</dbReference>
<dbReference type="PRINTS" id="PR00127">
    <property type="entry name" value="CLPPROTEASEP"/>
</dbReference>
<dbReference type="SUPFAM" id="SSF52096">
    <property type="entry name" value="ClpP/crotonase"/>
    <property type="match status" value="1"/>
</dbReference>
<dbReference type="PROSITE" id="PS00381">
    <property type="entry name" value="CLP_PROTEASE_SER"/>
    <property type="match status" value="1"/>
</dbReference>
<accession>Q31BD5</accession>
<gene>
    <name evidence="1" type="primary">clpP1</name>
    <name type="ordered locus">PMT9312_0750</name>
</gene>
<sequence length="195" mass="21796">MIPLVLEESGGSERVFDIYSRLLRERIIFLGEQVTSETANRIVAQLLFLEAEDPDKDIYMYINSPGGSVYDGLGIFDTMQHVKPDIHTVCVGLAASMGAFLLAAGTKGKRSSLRHSRIMIHQPLGGARGQASDIRIQADEILFLKERLNTELSERTGKDYETIKEDTDRDFYMSPSEAVEYGLIDLVLDKKPVKV</sequence>
<keyword id="KW-0963">Cytoplasm</keyword>
<keyword id="KW-0378">Hydrolase</keyword>
<keyword id="KW-0645">Protease</keyword>
<keyword id="KW-0720">Serine protease</keyword>
<name>CLPP1_PROM9</name>